<organism>
    <name type="scientific">Drosophila melanogaster</name>
    <name type="common">Fruit fly</name>
    <dbReference type="NCBI Taxonomy" id="7227"/>
    <lineage>
        <taxon>Eukaryota</taxon>
        <taxon>Metazoa</taxon>
        <taxon>Ecdysozoa</taxon>
        <taxon>Arthropoda</taxon>
        <taxon>Hexapoda</taxon>
        <taxon>Insecta</taxon>
        <taxon>Pterygota</taxon>
        <taxon>Neoptera</taxon>
        <taxon>Endopterygota</taxon>
        <taxon>Diptera</taxon>
        <taxon>Brachycera</taxon>
        <taxon>Muscomorpha</taxon>
        <taxon>Ephydroidea</taxon>
        <taxon>Drosophilidae</taxon>
        <taxon>Drosophila</taxon>
        <taxon>Sophophora</taxon>
    </lineage>
</organism>
<proteinExistence type="evidence at protein level"/>
<feature type="chain" id="PRO_0000218281" description="Prominin-like protein">
    <location>
        <begin position="1"/>
        <end position="1013"/>
    </location>
</feature>
<feature type="transmembrane region" description="Helical" evidence="1">
    <location>
        <begin position="32"/>
        <end position="52"/>
    </location>
</feature>
<feature type="transmembrane region" description="Helical" evidence="1">
    <location>
        <begin position="215"/>
        <end position="235"/>
    </location>
</feature>
<feature type="transmembrane region" description="Helical" evidence="1">
    <location>
        <begin position="489"/>
        <end position="509"/>
    </location>
</feature>
<feature type="transmembrane region" description="Helical" evidence="1">
    <location>
        <begin position="535"/>
        <end position="555"/>
    </location>
</feature>
<feature type="transmembrane region" description="Helical" evidence="1">
    <location>
        <begin position="852"/>
        <end position="872"/>
    </location>
</feature>
<feature type="region of interest" description="Disordered" evidence="2">
    <location>
        <begin position="918"/>
        <end position="1013"/>
    </location>
</feature>
<feature type="compositionally biased region" description="Gly residues" evidence="2">
    <location>
        <begin position="950"/>
        <end position="963"/>
    </location>
</feature>
<feature type="glycosylation site" description="N-linked (GlcNAc...) asparagine" evidence="3">
    <location>
        <position position="99"/>
    </location>
</feature>
<feature type="glycosylation site" description="N-linked (GlcNAc...) asparagine" evidence="1">
    <location>
        <position position="116"/>
    </location>
</feature>
<feature type="glycosylation site" description="N-linked (GlcNAc...) asparagine" evidence="3">
    <location>
        <position position="576"/>
    </location>
</feature>
<feature type="glycosylation site" description="N-linked (GlcNAc...) asparagine" evidence="1">
    <location>
        <position position="618"/>
    </location>
</feature>
<feature type="glycosylation site" description="N-linked (GlcNAc...) asparagine" evidence="1">
    <location>
        <position position="803"/>
    </location>
</feature>
<feature type="glycosylation site" description="N-linked (GlcNAc...) asparagine" evidence="1">
    <location>
        <position position="824"/>
    </location>
</feature>
<feature type="glycosylation site" description="N-linked (GlcNAc...) asparagine" evidence="1">
    <location>
        <position position="949"/>
    </location>
</feature>
<evidence type="ECO:0000255" key="1"/>
<evidence type="ECO:0000256" key="2">
    <source>
        <dbReference type="SAM" id="MobiDB-lite"/>
    </source>
</evidence>
<evidence type="ECO:0000269" key="3">
    <source>
    </source>
</evidence>
<evidence type="ECO:0000303" key="4">
    <source ref="1"/>
</evidence>
<evidence type="ECO:0000305" key="5"/>
<evidence type="ECO:0000312" key="6">
    <source>
        <dbReference type="FlyBase" id="FBgn0026189"/>
    </source>
</evidence>
<keyword id="KW-0325">Glycoprotein</keyword>
<keyword id="KW-0472">Membrane</keyword>
<keyword id="KW-1185">Reference proteome</keyword>
<keyword id="KW-0812">Transmembrane</keyword>
<keyword id="KW-1133">Transmembrane helix</keyword>
<protein>
    <recommendedName>
        <fullName evidence="4">Prominin-like protein</fullName>
    </recommendedName>
</protein>
<comment type="subcellular location">
    <subcellularLocation>
        <location evidence="5">Membrane</location>
        <topology evidence="5">Multi-pass membrane protein</topology>
    </subcellularLocation>
</comment>
<comment type="similarity">
    <text evidence="5">Belongs to the prominin family.</text>
</comment>
<comment type="sequence caution" evidence="5">
    <conflict type="erroneous initiation">
        <sequence resource="EMBL-CDS" id="AAL28872"/>
    </conflict>
</comment>
<comment type="sequence caution" evidence="5">
    <conflict type="erroneous translation">
        <sequence resource="EMBL-CDS" id="AAO39605"/>
    </conflict>
    <text>Wrong choice of frame.</text>
</comment>
<comment type="sequence caution" evidence="5">
    <conflict type="miscellaneous discrepancy">
        <sequence resource="EMBL-CDS" id="AAO39605"/>
    </conflict>
    <text>Intron retention.</text>
</comment>
<name>PROML_DROME</name>
<sequence length="1013" mass="115106">MGEVAATVEPLAAVKSKSMRSRKRRQRRRRQIAYLAICGLSVAIFGFALATLIRPTTAQADADPGSWRKGYVGHGTTHEQLGQPHWPPVQYTVYRPTTNYTKAPPPPTSAMNPIFNFTHFLYDKVLYRDEPIPEGYIVVKNSDTLSLGPKVEENDWRDLLAHYWMVLIWVVILVVLIIVIPFIAVCYCCFCCCRRCRQGCPPCTSKQDAQRRFCCGICLLILIIGLIFGIIIAFVTNKMIDSGFAETSETMKRGSEDTCTYLKDVADHVHHLMMYNYEEMETHVLDQLTHAHRHIFLDLSDTSESNSLAEMERVLENMPEALELMRQVEKMEKDLRFYGSQLRDGVRGIKRDVNFAVANLCQLQMCQKFLISSNIEHIDSSQCLHFDNLPNTKEFVEGMENIVASEYYAIPQRGLSRLKKVSDKVKTQLSFVVPPMMRDLTKGRTIFREHATNVRNIVEGVLSDIHIKTLHSTKSFEDVYERFGHDRNVVSLIVCLLILLVLFILIFALLCGCFGRRRTGYGDECCSKSTGATCLLLAILLIFCVFSFIALVGLFYFMLGMVTYQGACAPLRDQENNTLFRQLDASIDLNHYLPPSESNKEVVQPLKMSSAIKACHANQTIFDMMRQHNIYDINDLTRIKVMSHSQENTDSIKVFDEDLSTVVLLTKEERDELKTAGESKLAKYHSSLYMPSLCTQFTPMNLNALSEQLYKLSNDLEYPAYGWAKVSFWNEGLNTKAFYRNFVPKLTSLVEKMKANLKKIDELISYENHDFTNTIKILTATAINSEQFIQTRGKDYINALGGNLTNSIDQMIDDYIDMIIKEANESVGHCAPLSYIYYRGVDLICHRIVDPINGFWVGILLCALLFLPILFVAHRLMCLYKKIYPYLATVGAAGVVEGGSDYLYDAYSERDREHVPLANVPKKRRKAYERRREQQDYFEDASPSVSRGNRSGGDRGGGGGDGAPGSSSMRYNDMAPTHWDHEPPRYHNPPAAPPSSEYERPPPYYYPGASEQD</sequence>
<gene>
    <name evidence="6" type="primary">promL</name>
    <name evidence="4" type="synonym">prominin-like</name>
    <name evidence="6" type="ORF">CG7740</name>
</gene>
<accession>P82295</accession>
<accession>A4V1D5</accession>
<accession>A8WHI2</accession>
<accession>Q95RK1</accession>
<accession>Q9VZV0</accession>
<reference key="1">
    <citation type="submission" date="1999-08" db="EMBL/GenBank/DDBJ databases">
        <title>Sequence analysis of a Drosophila ortholog of mouse prominin and human prominin(mouse)-like 1.</title>
        <authorList>
            <person name="Corbeil D."/>
            <person name="Roper K."/>
            <person name="Huttner W.B."/>
        </authorList>
    </citation>
    <scope>NUCLEOTIDE SEQUENCE [MRNA]</scope>
    <source>
        <strain>Berkeley</strain>
        <tissue>Embryo</tissue>
    </source>
</reference>
<reference key="2">
    <citation type="journal article" date="2000" name="Science">
        <title>The genome sequence of Drosophila melanogaster.</title>
        <authorList>
            <person name="Adams M.D."/>
            <person name="Celniker S.E."/>
            <person name="Holt R.A."/>
            <person name="Evans C.A."/>
            <person name="Gocayne J.D."/>
            <person name="Amanatides P.G."/>
            <person name="Scherer S.E."/>
            <person name="Li P.W."/>
            <person name="Hoskins R.A."/>
            <person name="Galle R.F."/>
            <person name="George R.A."/>
            <person name="Lewis S.E."/>
            <person name="Richards S."/>
            <person name="Ashburner M."/>
            <person name="Henderson S.N."/>
            <person name="Sutton G.G."/>
            <person name="Wortman J.R."/>
            <person name="Yandell M.D."/>
            <person name="Zhang Q."/>
            <person name="Chen L.X."/>
            <person name="Brandon R.C."/>
            <person name="Rogers Y.-H.C."/>
            <person name="Blazej R.G."/>
            <person name="Champe M."/>
            <person name="Pfeiffer B.D."/>
            <person name="Wan K.H."/>
            <person name="Doyle C."/>
            <person name="Baxter E.G."/>
            <person name="Helt G."/>
            <person name="Nelson C.R."/>
            <person name="Miklos G.L.G."/>
            <person name="Abril J.F."/>
            <person name="Agbayani A."/>
            <person name="An H.-J."/>
            <person name="Andrews-Pfannkoch C."/>
            <person name="Baldwin D."/>
            <person name="Ballew R.M."/>
            <person name="Basu A."/>
            <person name="Baxendale J."/>
            <person name="Bayraktaroglu L."/>
            <person name="Beasley E.M."/>
            <person name="Beeson K.Y."/>
            <person name="Benos P.V."/>
            <person name="Berman B.P."/>
            <person name="Bhandari D."/>
            <person name="Bolshakov S."/>
            <person name="Borkova D."/>
            <person name="Botchan M.R."/>
            <person name="Bouck J."/>
            <person name="Brokstein P."/>
            <person name="Brottier P."/>
            <person name="Burtis K.C."/>
            <person name="Busam D.A."/>
            <person name="Butler H."/>
            <person name="Cadieu E."/>
            <person name="Center A."/>
            <person name="Chandra I."/>
            <person name="Cherry J.M."/>
            <person name="Cawley S."/>
            <person name="Dahlke C."/>
            <person name="Davenport L.B."/>
            <person name="Davies P."/>
            <person name="de Pablos B."/>
            <person name="Delcher A."/>
            <person name="Deng Z."/>
            <person name="Mays A.D."/>
            <person name="Dew I."/>
            <person name="Dietz S.M."/>
            <person name="Dodson K."/>
            <person name="Doup L.E."/>
            <person name="Downes M."/>
            <person name="Dugan-Rocha S."/>
            <person name="Dunkov B.C."/>
            <person name="Dunn P."/>
            <person name="Durbin K.J."/>
            <person name="Evangelista C.C."/>
            <person name="Ferraz C."/>
            <person name="Ferriera S."/>
            <person name="Fleischmann W."/>
            <person name="Fosler C."/>
            <person name="Gabrielian A.E."/>
            <person name="Garg N.S."/>
            <person name="Gelbart W.M."/>
            <person name="Glasser K."/>
            <person name="Glodek A."/>
            <person name="Gong F."/>
            <person name="Gorrell J.H."/>
            <person name="Gu Z."/>
            <person name="Guan P."/>
            <person name="Harris M."/>
            <person name="Harris N.L."/>
            <person name="Harvey D.A."/>
            <person name="Heiman T.J."/>
            <person name="Hernandez J.R."/>
            <person name="Houck J."/>
            <person name="Hostin D."/>
            <person name="Houston K.A."/>
            <person name="Howland T.J."/>
            <person name="Wei M.-H."/>
            <person name="Ibegwam C."/>
            <person name="Jalali M."/>
            <person name="Kalush F."/>
            <person name="Karpen G.H."/>
            <person name="Ke Z."/>
            <person name="Kennison J.A."/>
            <person name="Ketchum K.A."/>
            <person name="Kimmel B.E."/>
            <person name="Kodira C.D."/>
            <person name="Kraft C.L."/>
            <person name="Kravitz S."/>
            <person name="Kulp D."/>
            <person name="Lai Z."/>
            <person name="Lasko P."/>
            <person name="Lei Y."/>
            <person name="Levitsky A.A."/>
            <person name="Li J.H."/>
            <person name="Li Z."/>
            <person name="Liang Y."/>
            <person name="Lin X."/>
            <person name="Liu X."/>
            <person name="Mattei B."/>
            <person name="McIntosh T.C."/>
            <person name="McLeod M.P."/>
            <person name="McPherson D."/>
            <person name="Merkulov G."/>
            <person name="Milshina N.V."/>
            <person name="Mobarry C."/>
            <person name="Morris J."/>
            <person name="Moshrefi A."/>
            <person name="Mount S.M."/>
            <person name="Moy M."/>
            <person name="Murphy B."/>
            <person name="Murphy L."/>
            <person name="Muzny D.M."/>
            <person name="Nelson D.L."/>
            <person name="Nelson D.R."/>
            <person name="Nelson K.A."/>
            <person name="Nixon K."/>
            <person name="Nusskern D.R."/>
            <person name="Pacleb J.M."/>
            <person name="Palazzolo M."/>
            <person name="Pittman G.S."/>
            <person name="Pan S."/>
            <person name="Pollard J."/>
            <person name="Puri V."/>
            <person name="Reese M.G."/>
            <person name="Reinert K."/>
            <person name="Remington K."/>
            <person name="Saunders R.D.C."/>
            <person name="Scheeler F."/>
            <person name="Shen H."/>
            <person name="Shue B.C."/>
            <person name="Siden-Kiamos I."/>
            <person name="Simpson M."/>
            <person name="Skupski M.P."/>
            <person name="Smith T.J."/>
            <person name="Spier E."/>
            <person name="Spradling A.C."/>
            <person name="Stapleton M."/>
            <person name="Strong R."/>
            <person name="Sun E."/>
            <person name="Svirskas R."/>
            <person name="Tector C."/>
            <person name="Turner R."/>
            <person name="Venter E."/>
            <person name="Wang A.H."/>
            <person name="Wang X."/>
            <person name="Wang Z.-Y."/>
            <person name="Wassarman D.A."/>
            <person name="Weinstock G.M."/>
            <person name="Weissenbach J."/>
            <person name="Williams S.M."/>
            <person name="Woodage T."/>
            <person name="Worley K.C."/>
            <person name="Wu D."/>
            <person name="Yang S."/>
            <person name="Yao Q.A."/>
            <person name="Ye J."/>
            <person name="Yeh R.-F."/>
            <person name="Zaveri J.S."/>
            <person name="Zhan M."/>
            <person name="Zhang G."/>
            <person name="Zhao Q."/>
            <person name="Zheng L."/>
            <person name="Zheng X.H."/>
            <person name="Zhong F.N."/>
            <person name="Zhong W."/>
            <person name="Zhou X."/>
            <person name="Zhu S.C."/>
            <person name="Zhu X."/>
            <person name="Smith H.O."/>
            <person name="Gibbs R.A."/>
            <person name="Myers E.W."/>
            <person name="Rubin G.M."/>
            <person name="Venter J.C."/>
        </authorList>
    </citation>
    <scope>NUCLEOTIDE SEQUENCE [LARGE SCALE GENOMIC DNA]</scope>
    <source>
        <strain>Berkeley</strain>
    </source>
</reference>
<reference key="3">
    <citation type="journal article" date="2002" name="Genome Biol.">
        <title>Annotation of the Drosophila melanogaster euchromatic genome: a systematic review.</title>
        <authorList>
            <person name="Misra S."/>
            <person name="Crosby M.A."/>
            <person name="Mungall C.J."/>
            <person name="Matthews B.B."/>
            <person name="Campbell K.S."/>
            <person name="Hradecky P."/>
            <person name="Huang Y."/>
            <person name="Kaminker J.S."/>
            <person name="Millburn G.H."/>
            <person name="Prochnik S.E."/>
            <person name="Smith C.D."/>
            <person name="Tupy J.L."/>
            <person name="Whitfield E.J."/>
            <person name="Bayraktaroglu L."/>
            <person name="Berman B.P."/>
            <person name="Bettencourt B.R."/>
            <person name="Celniker S.E."/>
            <person name="de Grey A.D.N.J."/>
            <person name="Drysdale R.A."/>
            <person name="Harris N.L."/>
            <person name="Richter J."/>
            <person name="Russo S."/>
            <person name="Schroeder A.J."/>
            <person name="Shu S.Q."/>
            <person name="Stapleton M."/>
            <person name="Yamada C."/>
            <person name="Ashburner M."/>
            <person name="Gelbart W.M."/>
            <person name="Rubin G.M."/>
            <person name="Lewis S.E."/>
        </authorList>
    </citation>
    <scope>GENOME REANNOTATION</scope>
    <source>
        <strain>Berkeley</strain>
    </source>
</reference>
<reference key="4">
    <citation type="submission" date="2007-11" db="EMBL/GenBank/DDBJ databases">
        <authorList>
            <person name="Stapleton M."/>
            <person name="Carlson J.W."/>
            <person name="Frise E."/>
            <person name="Kapadia B."/>
            <person name="Park S."/>
            <person name="Wan K.H."/>
            <person name="Yu C."/>
            <person name="Celniker S.E."/>
        </authorList>
    </citation>
    <scope>NUCLEOTIDE SEQUENCE [LARGE SCALE MRNA]</scope>
    <source>
        <strain>Berkeley</strain>
        <tissue>Embryo</tissue>
    </source>
</reference>
<reference key="5">
    <citation type="journal article" date="2002" name="Genome Biol.">
        <title>A Drosophila full-length cDNA resource.</title>
        <authorList>
            <person name="Stapleton M."/>
            <person name="Carlson J.W."/>
            <person name="Brokstein P."/>
            <person name="Yu C."/>
            <person name="Champe M."/>
            <person name="George R.A."/>
            <person name="Guarin H."/>
            <person name="Kronmiller B."/>
            <person name="Pacleb J.M."/>
            <person name="Park S."/>
            <person name="Wan K.H."/>
            <person name="Rubin G.M."/>
            <person name="Celniker S.E."/>
        </authorList>
    </citation>
    <scope>NUCLEOTIDE SEQUENCE [LARGE SCALE MRNA] OF 482-1013</scope>
    <source>
        <strain>Berkeley</strain>
        <tissue>Embryo</tissue>
    </source>
</reference>
<reference key="6">
    <citation type="submission" date="2003-02" db="EMBL/GenBank/DDBJ databases">
        <authorList>
            <person name="Stapleton M."/>
            <person name="Brokstein P."/>
            <person name="Hong L."/>
            <person name="Agbayani A."/>
            <person name="Carlson J.W."/>
            <person name="Champe M."/>
            <person name="Chavez C."/>
            <person name="Dorsett V."/>
            <person name="Dresnek D."/>
            <person name="Farfan D."/>
            <person name="Frise E."/>
            <person name="George R.A."/>
            <person name="Gonzalez M."/>
            <person name="Guarin H."/>
            <person name="Kronmiller B."/>
            <person name="Li P.W."/>
            <person name="Liao G."/>
            <person name="Miranda A."/>
            <person name="Mungall C.J."/>
            <person name="Nunoo J."/>
            <person name="Pacleb J.M."/>
            <person name="Paragas V."/>
            <person name="Park S."/>
            <person name="Patel S."/>
            <person name="Phouanenavong S."/>
            <person name="Wan K.H."/>
            <person name="Yu C."/>
            <person name="Lewis S.E."/>
            <person name="Rubin G.M."/>
            <person name="Celniker S.E."/>
        </authorList>
    </citation>
    <scope>NUCLEOTIDE SEQUENCE [LARGE SCALE MRNA] OF 978-1013</scope>
    <source>
        <strain>Berkeley</strain>
        <tissue>Ovary</tissue>
    </source>
</reference>
<reference key="7">
    <citation type="journal article" date="2009" name="Nat. Biotechnol.">
        <title>Mass-spectrometric identification and relative quantification of N-linked cell surface glycoproteins.</title>
        <authorList>
            <person name="Wollscheid B."/>
            <person name="Bausch-Fluck D."/>
            <person name="Henderson C."/>
            <person name="O'Brien R."/>
            <person name="Bibel M."/>
            <person name="Schiess R."/>
            <person name="Aebersold R."/>
            <person name="Watts J.D."/>
        </authorList>
    </citation>
    <scope>GLYCOSYLATION [LARGE SCALE ANALYSIS] AT ASN-99 AND ASN-576</scope>
    <scope>IDENTIFICATION BY MASS SPECTROMETRY</scope>
</reference>
<dbReference type="EMBL" id="AF127935">
    <property type="protein sequence ID" value="AAD22487.2"/>
    <property type="molecule type" value="mRNA"/>
</dbReference>
<dbReference type="EMBL" id="AF197345">
    <property type="protein sequence ID" value="AAF07212.1"/>
    <property type="molecule type" value="mRNA"/>
</dbReference>
<dbReference type="EMBL" id="AE014296">
    <property type="protein sequence ID" value="AAF47716.2"/>
    <property type="molecule type" value="Genomic_DNA"/>
</dbReference>
<dbReference type="EMBL" id="AE014296">
    <property type="protein sequence ID" value="AAN11530.1"/>
    <property type="molecule type" value="Genomic_DNA"/>
</dbReference>
<dbReference type="EMBL" id="AE014296">
    <property type="protein sequence ID" value="AAN11531.1"/>
    <property type="molecule type" value="Genomic_DNA"/>
</dbReference>
<dbReference type="EMBL" id="BT031128">
    <property type="protein sequence ID" value="ABX00750.1"/>
    <property type="molecule type" value="mRNA"/>
</dbReference>
<dbReference type="EMBL" id="AY061324">
    <property type="protein sequence ID" value="AAL28872.1"/>
    <property type="status" value="ALT_INIT"/>
    <property type="molecule type" value="mRNA"/>
</dbReference>
<dbReference type="EMBL" id="BT003602">
    <property type="protein sequence ID" value="AAO39605.1"/>
    <property type="status" value="ALT_SEQ"/>
    <property type="molecule type" value="mRNA"/>
</dbReference>
<dbReference type="RefSeq" id="NP_001261351.1">
    <property type="nucleotide sequence ID" value="NM_001274422.1"/>
</dbReference>
<dbReference type="RefSeq" id="NP_647770.1">
    <property type="nucleotide sequence ID" value="NM_139513.3"/>
</dbReference>
<dbReference type="RefSeq" id="NP_728809.1">
    <property type="nucleotide sequence ID" value="NM_167986.1"/>
</dbReference>
<dbReference type="RefSeq" id="NP_728810.1">
    <property type="nucleotide sequence ID" value="NM_167987.4"/>
</dbReference>
<dbReference type="SMR" id="P82295"/>
<dbReference type="BioGRID" id="63870">
    <property type="interactions" value="13"/>
</dbReference>
<dbReference type="DIP" id="DIP-18139N"/>
<dbReference type="FunCoup" id="P82295">
    <property type="interactions" value="74"/>
</dbReference>
<dbReference type="IntAct" id="P82295">
    <property type="interactions" value="11"/>
</dbReference>
<dbReference type="STRING" id="7227.FBpp0072980"/>
<dbReference type="GlyCosmos" id="P82295">
    <property type="glycosylation" value="7 sites, No reported glycans"/>
</dbReference>
<dbReference type="GlyGen" id="P82295">
    <property type="glycosylation" value="8 sites"/>
</dbReference>
<dbReference type="iPTMnet" id="P82295"/>
<dbReference type="PaxDb" id="7227-FBpp0072980"/>
<dbReference type="DNASU" id="38372"/>
<dbReference type="EnsemblMetazoa" id="FBtr0073118">
    <property type="protein sequence ID" value="FBpp0072980"/>
    <property type="gene ID" value="FBgn0026189"/>
</dbReference>
<dbReference type="EnsemblMetazoa" id="FBtr0073119">
    <property type="protein sequence ID" value="FBpp0072981"/>
    <property type="gene ID" value="FBgn0026189"/>
</dbReference>
<dbReference type="EnsemblMetazoa" id="FBtr0073120">
    <property type="protein sequence ID" value="FBpp0072982"/>
    <property type="gene ID" value="FBgn0026189"/>
</dbReference>
<dbReference type="EnsemblMetazoa" id="FBtr0333895">
    <property type="protein sequence ID" value="FBpp0306027"/>
    <property type="gene ID" value="FBgn0026189"/>
</dbReference>
<dbReference type="GeneID" id="38372"/>
<dbReference type="KEGG" id="dme:Dmel_CG7740"/>
<dbReference type="AGR" id="FB:FBgn0026189"/>
<dbReference type="CTD" id="38372"/>
<dbReference type="FlyBase" id="FBgn0026189">
    <property type="gene designation" value="promL"/>
</dbReference>
<dbReference type="VEuPathDB" id="VectorBase:FBgn0026189"/>
<dbReference type="eggNOG" id="KOG4331">
    <property type="taxonomic scope" value="Eukaryota"/>
</dbReference>
<dbReference type="GeneTree" id="ENSGT00530000063586"/>
<dbReference type="InParanoid" id="P82295"/>
<dbReference type="OMA" id="VYHLMMY"/>
<dbReference type="OrthoDB" id="6229420at2759"/>
<dbReference type="PhylomeDB" id="P82295"/>
<dbReference type="SignaLink" id="P82295"/>
<dbReference type="BioGRID-ORCS" id="38372">
    <property type="hits" value="1 hit in 3 CRISPR screens"/>
</dbReference>
<dbReference type="ChiTaRS" id="prominin-like">
    <property type="organism name" value="fly"/>
</dbReference>
<dbReference type="GenomeRNAi" id="38372"/>
<dbReference type="PRO" id="PR:P82295"/>
<dbReference type="Proteomes" id="UP000000803">
    <property type="component" value="Chromosome 3L"/>
</dbReference>
<dbReference type="Bgee" id="FBgn0026189">
    <property type="expression patterns" value="Expressed in T neuron T5a (Drosophila) in embryonic/larval optic lobe (Drosophila) and 229 other cell types or tissues"/>
</dbReference>
<dbReference type="ExpressionAtlas" id="P82295">
    <property type="expression patterns" value="baseline and differential"/>
</dbReference>
<dbReference type="GO" id="GO:0016324">
    <property type="term" value="C:apical plasma membrane"/>
    <property type="evidence" value="ECO:0000314"/>
    <property type="project" value="FlyBase"/>
</dbReference>
<dbReference type="GO" id="GO:0032528">
    <property type="term" value="P:microvillus organization"/>
    <property type="evidence" value="ECO:0000315"/>
    <property type="project" value="FlyBase"/>
</dbReference>
<dbReference type="InterPro" id="IPR008795">
    <property type="entry name" value="Prominin"/>
</dbReference>
<dbReference type="PANTHER" id="PTHR22730">
    <property type="entry name" value="PROMININ PROM PROTEIN"/>
    <property type="match status" value="1"/>
</dbReference>
<dbReference type="PANTHER" id="PTHR22730:SF1">
    <property type="entry name" value="PROMININ-LIKE PROTEIN"/>
    <property type="match status" value="1"/>
</dbReference>
<dbReference type="Pfam" id="PF05478">
    <property type="entry name" value="Prominin"/>
    <property type="match status" value="1"/>
</dbReference>